<proteinExistence type="inferred from homology"/>
<organism>
    <name type="scientific">Aeromonas hydrophila subsp. hydrophila (strain ATCC 7966 / DSM 30187 / BCRC 13018 / CCUG 14551 / JCM 1027 / KCTC 2358 / NCIMB 9240 / NCTC 8049)</name>
    <dbReference type="NCBI Taxonomy" id="380703"/>
    <lineage>
        <taxon>Bacteria</taxon>
        <taxon>Pseudomonadati</taxon>
        <taxon>Pseudomonadota</taxon>
        <taxon>Gammaproteobacteria</taxon>
        <taxon>Aeromonadales</taxon>
        <taxon>Aeromonadaceae</taxon>
        <taxon>Aeromonas</taxon>
    </lineage>
</organism>
<feature type="chain" id="PRO_1000131968" description="Aspartate/glutamate leucyltransferase">
    <location>
        <begin position="1"/>
        <end position="238"/>
    </location>
</feature>
<dbReference type="EC" id="2.3.2.29" evidence="1"/>
<dbReference type="EMBL" id="CP000462">
    <property type="protein sequence ID" value="ABK38985.1"/>
    <property type="molecule type" value="Genomic_DNA"/>
</dbReference>
<dbReference type="RefSeq" id="WP_011705735.1">
    <property type="nucleotide sequence ID" value="NC_008570.1"/>
</dbReference>
<dbReference type="RefSeq" id="YP_856390.1">
    <property type="nucleotide sequence ID" value="NC_008570.1"/>
</dbReference>
<dbReference type="SMR" id="A0KJD9"/>
<dbReference type="STRING" id="380703.AHA_1859"/>
<dbReference type="EnsemblBacteria" id="ABK38985">
    <property type="protein sequence ID" value="ABK38985"/>
    <property type="gene ID" value="AHA_1859"/>
</dbReference>
<dbReference type="GeneID" id="4489213"/>
<dbReference type="KEGG" id="aha:AHA_1859"/>
<dbReference type="PATRIC" id="fig|380703.7.peg.1869"/>
<dbReference type="eggNOG" id="COG2935">
    <property type="taxonomic scope" value="Bacteria"/>
</dbReference>
<dbReference type="HOGENOM" id="CLU_077607_0_0_6"/>
<dbReference type="OrthoDB" id="9782022at2"/>
<dbReference type="Proteomes" id="UP000000756">
    <property type="component" value="Chromosome"/>
</dbReference>
<dbReference type="GO" id="GO:0005737">
    <property type="term" value="C:cytoplasm"/>
    <property type="evidence" value="ECO:0007669"/>
    <property type="project" value="UniProtKB-SubCell"/>
</dbReference>
<dbReference type="GO" id="GO:0004057">
    <property type="term" value="F:arginyl-tRNA--protein transferase activity"/>
    <property type="evidence" value="ECO:0007669"/>
    <property type="project" value="InterPro"/>
</dbReference>
<dbReference type="GO" id="GO:0008914">
    <property type="term" value="F:leucyl-tRNA--protein transferase activity"/>
    <property type="evidence" value="ECO:0007669"/>
    <property type="project" value="UniProtKB-UniRule"/>
</dbReference>
<dbReference type="GO" id="GO:0071596">
    <property type="term" value="P:ubiquitin-dependent protein catabolic process via the N-end rule pathway"/>
    <property type="evidence" value="ECO:0007669"/>
    <property type="project" value="InterPro"/>
</dbReference>
<dbReference type="HAMAP" id="MF_00689">
    <property type="entry name" value="Bpt"/>
    <property type="match status" value="1"/>
</dbReference>
<dbReference type="InterPro" id="IPR016181">
    <property type="entry name" value="Acyl_CoA_acyltransferase"/>
</dbReference>
<dbReference type="InterPro" id="IPR017138">
    <property type="entry name" value="Asp_Glu_LeuTrfase"/>
</dbReference>
<dbReference type="InterPro" id="IPR030700">
    <property type="entry name" value="N-end_Aminoacyl_Trfase"/>
</dbReference>
<dbReference type="InterPro" id="IPR007472">
    <property type="entry name" value="N-end_Aminoacyl_Trfase_C"/>
</dbReference>
<dbReference type="InterPro" id="IPR007471">
    <property type="entry name" value="N-end_Aminoacyl_Trfase_N"/>
</dbReference>
<dbReference type="NCBIfam" id="NF002341">
    <property type="entry name" value="PRK01305.1-1"/>
    <property type="match status" value="1"/>
</dbReference>
<dbReference type="NCBIfam" id="NF002342">
    <property type="entry name" value="PRK01305.1-3"/>
    <property type="match status" value="1"/>
</dbReference>
<dbReference type="NCBIfam" id="NF002345">
    <property type="entry name" value="PRK01305.2-2"/>
    <property type="match status" value="1"/>
</dbReference>
<dbReference type="NCBIfam" id="NF002346">
    <property type="entry name" value="PRK01305.2-3"/>
    <property type="match status" value="1"/>
</dbReference>
<dbReference type="PANTHER" id="PTHR21367">
    <property type="entry name" value="ARGININE-TRNA-PROTEIN TRANSFERASE 1"/>
    <property type="match status" value="1"/>
</dbReference>
<dbReference type="PANTHER" id="PTHR21367:SF1">
    <property type="entry name" value="ARGINYL-TRNA--PROTEIN TRANSFERASE 1"/>
    <property type="match status" value="1"/>
</dbReference>
<dbReference type="Pfam" id="PF04377">
    <property type="entry name" value="ATE_C"/>
    <property type="match status" value="1"/>
</dbReference>
<dbReference type="Pfam" id="PF04376">
    <property type="entry name" value="ATE_N"/>
    <property type="match status" value="1"/>
</dbReference>
<dbReference type="PIRSF" id="PIRSF037208">
    <property type="entry name" value="ATE_pro_prd"/>
    <property type="match status" value="1"/>
</dbReference>
<dbReference type="SUPFAM" id="SSF55729">
    <property type="entry name" value="Acyl-CoA N-acyltransferases (Nat)"/>
    <property type="match status" value="1"/>
</dbReference>
<gene>
    <name evidence="1" type="primary">bpt</name>
    <name type="ordered locus">AHA_1859</name>
</gene>
<name>BPT_AERHH</name>
<accession>A0KJD9</accession>
<reference key="1">
    <citation type="journal article" date="2006" name="J. Bacteriol.">
        <title>Genome sequence of Aeromonas hydrophila ATCC 7966T: jack of all trades.</title>
        <authorList>
            <person name="Seshadri R."/>
            <person name="Joseph S.W."/>
            <person name="Chopra A.K."/>
            <person name="Sha J."/>
            <person name="Shaw J."/>
            <person name="Graf J."/>
            <person name="Haft D.H."/>
            <person name="Wu M."/>
            <person name="Ren Q."/>
            <person name="Rosovitz M.J."/>
            <person name="Madupu R."/>
            <person name="Tallon L."/>
            <person name="Kim M."/>
            <person name="Jin S."/>
            <person name="Vuong H."/>
            <person name="Stine O.C."/>
            <person name="Ali A."/>
            <person name="Horneman A.J."/>
            <person name="Heidelberg J.F."/>
        </authorList>
    </citation>
    <scope>NUCLEOTIDE SEQUENCE [LARGE SCALE GENOMIC DNA]</scope>
    <source>
        <strain>ATCC 7966 / DSM 30187 / BCRC 13018 / CCUG 14551 / JCM 1027 / KCTC 2358 / NCIMB 9240 / NCTC 8049</strain>
    </source>
</reference>
<sequence length="238" mass="28128">MTEEVILKVGLTPKHQCSYLGHEQEQLLVLMDHSLLNASGYERLLTAGFRRSGNDIYRPHCPACNACQSLRIHSERFVPSRSQKRIRQLNQDIELVLSYDDKPEYYQLYERYIRERHHDGSMYPPSRTQYKGFLHCDWMPPLYLEMRKDNRLIGVATTDLLPHSLSAMYTFFDPAHADRSLGTFAILSQLELARRTGRSWLYLGYLVEECRKMNYKRQYLPHERLIQGEWKNIDSKPE</sequence>
<protein>
    <recommendedName>
        <fullName evidence="1">Aspartate/glutamate leucyltransferase</fullName>
        <ecNumber evidence="1">2.3.2.29</ecNumber>
    </recommendedName>
</protein>
<evidence type="ECO:0000255" key="1">
    <source>
        <dbReference type="HAMAP-Rule" id="MF_00689"/>
    </source>
</evidence>
<keyword id="KW-0012">Acyltransferase</keyword>
<keyword id="KW-0963">Cytoplasm</keyword>
<keyword id="KW-1185">Reference proteome</keyword>
<keyword id="KW-0808">Transferase</keyword>
<comment type="function">
    <text evidence="1">Functions in the N-end rule pathway of protein degradation where it conjugates Leu from its aminoacyl-tRNA to the N-termini of proteins containing an N-terminal aspartate or glutamate.</text>
</comment>
<comment type="catalytic activity">
    <reaction evidence="1">
        <text>N-terminal L-glutamyl-[protein] + L-leucyl-tRNA(Leu) = N-terminal L-leucyl-L-glutamyl-[protein] + tRNA(Leu) + H(+)</text>
        <dbReference type="Rhea" id="RHEA:50412"/>
        <dbReference type="Rhea" id="RHEA-COMP:9613"/>
        <dbReference type="Rhea" id="RHEA-COMP:9622"/>
        <dbReference type="Rhea" id="RHEA-COMP:12664"/>
        <dbReference type="Rhea" id="RHEA-COMP:12668"/>
        <dbReference type="ChEBI" id="CHEBI:15378"/>
        <dbReference type="ChEBI" id="CHEBI:64721"/>
        <dbReference type="ChEBI" id="CHEBI:78442"/>
        <dbReference type="ChEBI" id="CHEBI:78494"/>
        <dbReference type="ChEBI" id="CHEBI:133041"/>
        <dbReference type="EC" id="2.3.2.29"/>
    </reaction>
</comment>
<comment type="catalytic activity">
    <reaction evidence="1">
        <text>N-terminal L-aspartyl-[protein] + L-leucyl-tRNA(Leu) = N-terminal L-leucyl-L-aspartyl-[protein] + tRNA(Leu) + H(+)</text>
        <dbReference type="Rhea" id="RHEA:50420"/>
        <dbReference type="Rhea" id="RHEA-COMP:9613"/>
        <dbReference type="Rhea" id="RHEA-COMP:9622"/>
        <dbReference type="Rhea" id="RHEA-COMP:12669"/>
        <dbReference type="Rhea" id="RHEA-COMP:12674"/>
        <dbReference type="ChEBI" id="CHEBI:15378"/>
        <dbReference type="ChEBI" id="CHEBI:64720"/>
        <dbReference type="ChEBI" id="CHEBI:78442"/>
        <dbReference type="ChEBI" id="CHEBI:78494"/>
        <dbReference type="ChEBI" id="CHEBI:133042"/>
        <dbReference type="EC" id="2.3.2.29"/>
    </reaction>
</comment>
<comment type="subcellular location">
    <subcellularLocation>
        <location evidence="1">Cytoplasm</location>
    </subcellularLocation>
</comment>
<comment type="similarity">
    <text evidence="1">Belongs to the R-transferase family. Bpt subfamily.</text>
</comment>